<feature type="chain" id="PRO_0000369458" description="Non-structural protein 3">
    <location>
        <begin position="1"/>
        <end position="313"/>
    </location>
</feature>
<feature type="region of interest" description="RNA-binding" evidence="1">
    <location>
        <begin position="1"/>
        <end position="149"/>
    </location>
</feature>
<feature type="region of interest" description="Dimerization" evidence="1">
    <location>
        <begin position="150"/>
        <end position="206"/>
    </location>
</feature>
<feature type="region of interest" description="Interaction with host ZC3H7B" evidence="1">
    <location>
        <begin position="170"/>
        <end position="234"/>
    </location>
</feature>
<feature type="region of interest" description="Interaction with host EIF4G1" evidence="1">
    <location>
        <begin position="208"/>
        <end position="313"/>
    </location>
</feature>
<feature type="coiled-coil region" evidence="1">
    <location>
        <begin position="166"/>
        <end position="237"/>
    </location>
</feature>
<feature type="sequence conflict" description="In Ref. 2; AAN15755." ref="2">
    <original>LELMGI</original>
    <variation>FEFMGF</variation>
    <location>
        <begin position="30"/>
        <end position="35"/>
    </location>
</feature>
<feature type="sequence conflict" description="In Ref. 2; AAN15755." ref="2">
    <original>G</original>
    <variation>C</variation>
    <location>
        <position position="58"/>
    </location>
</feature>
<feature type="sequence conflict" description="In Ref. 2; AAN15754." ref="2">
    <original>L</original>
    <variation>F</variation>
    <location>
        <position position="284"/>
    </location>
</feature>
<accession>Q82054</accession>
<accession>Q8B6X7</accession>
<accession>Q8B6X8</accession>
<sequence>MLKMESTQQMVSSIINTSFEAAVVAATSTLELMGIQYDYNEVFTRVKSKFDYVMDDSGVKNNLLGKAITIAQALNGKFGSAIRNRNWMTDSKTVAKLDEDVSKLRMTLSSKGIDQKMRVLNACFSVKRIPGKSSSIIKCTRLMKDKIEGGEVEVDDSYVDEKMEIDTIDWKSRYDQLEKRFEALKQRVNEKYNTWVQKAKKVNENMYSLQNVISQQQNQISDLQQYCNKLEADLQGKFSSLVSSVEWYLRSMELPDDVKNDIEQQLNSIDAINPINAIDDIESLIRNLIQDYDRTFLMLKGLLKQCNYEYAYE</sequence>
<comment type="function">
    <text evidence="1">Plays an important role in stimulating the translation of viral mRNAs. These mRNAs are capped but not polyadenylated, instead terminating in a conserved sequence 'GACC' at the 3' that is recognized by NSP3, which competes with host PABPC1 for EIF4G1 binding. The interaction between NSP3 and host EIF4G1 stabilizes the EIF4E-EIF4G1 interaction, thereby facilitating the initiation of capped mRNA translation.</text>
</comment>
<comment type="subunit">
    <text evidence="1">Homodimer. Interacts (via the coiled-coil region) with host ZC3H7B (via LD motif). Interacts with host EIF4G1.</text>
</comment>
<comment type="subcellular location">
    <subcellularLocation>
        <location evidence="1">Host cytoplasm</location>
    </subcellularLocation>
</comment>
<comment type="similarity">
    <text evidence="1">Belongs to the rotavirus NSP3 family.</text>
</comment>
<name>NSP3_ROTHW</name>
<protein>
    <recommendedName>
        <fullName evidence="1">Non-structural protein 3</fullName>
        <shortName evidence="1">NSP3</shortName>
    </recommendedName>
    <alternativeName>
        <fullName evidence="1">NCVP4</fullName>
    </alternativeName>
    <alternativeName>
        <fullName evidence="1">Non-structural RNA-binding protein 34</fullName>
        <shortName evidence="1">NS34</shortName>
    </alternativeName>
</protein>
<keyword id="KW-0175">Coiled coil</keyword>
<keyword id="KW-1035">Host cytoplasm</keyword>
<keyword id="KW-0945">Host-virus interaction</keyword>
<keyword id="KW-0694">RNA-binding</keyword>
<keyword id="KW-0810">Translation regulation</keyword>
<proteinExistence type="evidence at transcript level"/>
<evidence type="ECO:0000255" key="1">
    <source>
        <dbReference type="HAMAP-Rule" id="MF_04094"/>
    </source>
</evidence>
<organismHost>
    <name type="scientific">Homo sapiens</name>
    <name type="common">Human</name>
    <dbReference type="NCBI Taxonomy" id="9606"/>
</organismHost>
<organism>
    <name type="scientific">Rotavirus A (strain RVA/Human/United States/Wa/1974/G1P1A[8])</name>
    <name type="common">RV-A</name>
    <dbReference type="NCBI Taxonomy" id="10962"/>
    <lineage>
        <taxon>Viruses</taxon>
        <taxon>Riboviria</taxon>
        <taxon>Orthornavirae</taxon>
        <taxon>Duplornaviricota</taxon>
        <taxon>Resentoviricetes</taxon>
        <taxon>Reovirales</taxon>
        <taxon>Sedoreoviridae</taxon>
        <taxon>Rotavirus</taxon>
        <taxon>Rotavirus A</taxon>
    </lineage>
</organism>
<dbReference type="EMBL" id="X81434">
    <property type="protein sequence ID" value="CAA57193.1"/>
    <property type="molecule type" value="mRNA"/>
</dbReference>
<dbReference type="EMBL" id="AH003952">
    <property type="protein sequence ID" value="AAN15754.1"/>
    <property type="molecule type" value="Genomic_RNA"/>
</dbReference>
<dbReference type="EMBL" id="AH003952">
    <property type="protein sequence ID" value="AAN15755.1"/>
    <property type="molecule type" value="Genomic_RNA"/>
</dbReference>
<dbReference type="PIR" id="S51731">
    <property type="entry name" value="S51731"/>
</dbReference>
<dbReference type="SMR" id="Q82054"/>
<dbReference type="Proteomes" id="UP000006581">
    <property type="component" value="Genome"/>
</dbReference>
<dbReference type="GO" id="GO:0030430">
    <property type="term" value="C:host cell cytoplasm"/>
    <property type="evidence" value="ECO:0007669"/>
    <property type="project" value="UniProtKB-SubCell"/>
</dbReference>
<dbReference type="GO" id="GO:0003723">
    <property type="term" value="F:RNA binding"/>
    <property type="evidence" value="ECO:0007669"/>
    <property type="project" value="UniProtKB-UniRule"/>
</dbReference>
<dbReference type="GO" id="GO:0006417">
    <property type="term" value="P:regulation of translation"/>
    <property type="evidence" value="ECO:0007669"/>
    <property type="project" value="UniProtKB-UniRule"/>
</dbReference>
<dbReference type="CDD" id="cd20714">
    <property type="entry name" value="NSP3_rotavirus"/>
    <property type="match status" value="1"/>
</dbReference>
<dbReference type="Gene3D" id="3.30.70.1610">
    <property type="match status" value="1"/>
</dbReference>
<dbReference type="Gene3D" id="1.20.5.970">
    <property type="entry name" value="Nonstructural RNA-binding protein"/>
    <property type="match status" value="1"/>
</dbReference>
<dbReference type="Gene3D" id="6.10.280.20">
    <property type="entry name" value="Rotavirus non-structural protein NSP3, N-terminal domain"/>
    <property type="match status" value="1"/>
</dbReference>
<dbReference type="HAMAP" id="MF_04094">
    <property type="entry name" value="ROTA_A_NSP3"/>
    <property type="match status" value="1"/>
</dbReference>
<dbReference type="HAMAP" id="MF_04090">
    <property type="entry name" value="ROTA_NSP3"/>
    <property type="match status" value="1"/>
</dbReference>
<dbReference type="InterPro" id="IPR042519">
    <property type="entry name" value="NSP3_N_rotavirus"/>
</dbReference>
<dbReference type="InterPro" id="IPR036082">
    <property type="entry name" value="NSP3_sf"/>
</dbReference>
<dbReference type="InterPro" id="IPR002873">
    <property type="entry name" value="Rotavirus_NSP3"/>
</dbReference>
<dbReference type="Pfam" id="PF01665">
    <property type="entry name" value="Rota_NSP3"/>
    <property type="match status" value="1"/>
</dbReference>
<dbReference type="SUPFAM" id="SSF69903">
    <property type="entry name" value="NSP3 homodimer"/>
    <property type="match status" value="1"/>
</dbReference>
<dbReference type="SUPFAM" id="SSF58030">
    <property type="entry name" value="Rotavirus nonstructural proteins"/>
    <property type="match status" value="1"/>
</dbReference>
<reference key="1">
    <citation type="journal article" date="1995" name="Virology">
        <title>Comparative nucleotide and amino acid sequence analysis of the sequence-specific RNA-binding rotavirus nonstructural protein NSP3.</title>
        <authorList>
            <person name="Rao C.D."/>
            <person name="Das M."/>
            <person name="Ilango P."/>
            <person name="Lalwani R."/>
            <person name="Rao B.S."/>
            <person name="Gowda K."/>
        </authorList>
    </citation>
    <scope>NUCLEOTIDE SEQUENCE [MRNA]</scope>
</reference>
<reference key="2">
    <citation type="journal article" date="1992" name="Arch. Virol.">
        <title>Genomic rearrangements in human rotavirus strain Wa; analysis of rearranged RNA segment 7.</title>
        <authorList>
            <person name="Mendez E."/>
            <person name="Arias C.F."/>
            <person name="Lopez S."/>
        </authorList>
    </citation>
    <scope>NUCLEOTIDE SEQUENCE [GENOMIC RNA] OF 4-61 AND 279-313</scope>
</reference>